<accession>Q58888</accession>
<dbReference type="EMBL" id="L77117">
    <property type="protein sequence ID" value="AAB99511.1"/>
    <property type="molecule type" value="Genomic_DNA"/>
</dbReference>
<dbReference type="PIR" id="D64486">
    <property type="entry name" value="D64486"/>
</dbReference>
<dbReference type="FunCoup" id="Q58888">
    <property type="interactions" value="6"/>
</dbReference>
<dbReference type="STRING" id="243232.MJ_1493"/>
<dbReference type="PaxDb" id="243232-MJ_1493"/>
<dbReference type="EnsemblBacteria" id="AAB99511">
    <property type="protein sequence ID" value="AAB99511"/>
    <property type="gene ID" value="MJ_1493"/>
</dbReference>
<dbReference type="KEGG" id="mja:MJ_1493"/>
<dbReference type="eggNOG" id="arCOG03430">
    <property type="taxonomic scope" value="Archaea"/>
</dbReference>
<dbReference type="HOGENOM" id="CLU_1207638_0_0_2"/>
<dbReference type="InParanoid" id="Q58888"/>
<dbReference type="PhylomeDB" id="Q58888"/>
<dbReference type="Proteomes" id="UP000000805">
    <property type="component" value="Chromosome"/>
</dbReference>
<dbReference type="GO" id="GO:0008270">
    <property type="term" value="F:zinc ion binding"/>
    <property type="evidence" value="ECO:0007669"/>
    <property type="project" value="UniProtKB-KW"/>
</dbReference>
<dbReference type="InterPro" id="IPR007527">
    <property type="entry name" value="Znf_SWIM"/>
</dbReference>
<dbReference type="Pfam" id="PF04434">
    <property type="entry name" value="SWIM"/>
    <property type="match status" value="1"/>
</dbReference>
<dbReference type="PROSITE" id="PS50966">
    <property type="entry name" value="ZF_SWIM"/>
    <property type="match status" value="1"/>
</dbReference>
<keyword id="KW-0479">Metal-binding</keyword>
<keyword id="KW-1185">Reference proteome</keyword>
<keyword id="KW-0862">Zinc</keyword>
<keyword id="KW-0863">Zinc-finger</keyword>
<protein>
    <recommendedName>
        <fullName>Uncharacterized protein MJ1493</fullName>
    </recommendedName>
</protein>
<organism>
    <name type="scientific">Methanocaldococcus jannaschii (strain ATCC 43067 / DSM 2661 / JAL-1 / JCM 10045 / NBRC 100440)</name>
    <name type="common">Methanococcus jannaschii</name>
    <dbReference type="NCBI Taxonomy" id="243232"/>
    <lineage>
        <taxon>Archaea</taxon>
        <taxon>Methanobacteriati</taxon>
        <taxon>Methanobacteriota</taxon>
        <taxon>Methanomada group</taxon>
        <taxon>Methanococci</taxon>
        <taxon>Methanococcales</taxon>
        <taxon>Methanocaldococcaceae</taxon>
        <taxon>Methanocaldococcus</taxon>
    </lineage>
</organism>
<gene>
    <name type="ordered locus">MJ1493</name>
</gene>
<name>Y1493_METJA</name>
<feature type="chain" id="PRO_0000107377" description="Uncharacterized protein MJ1493">
    <location>
        <begin position="1"/>
        <end position="231"/>
    </location>
</feature>
<feature type="zinc finger region" description="SWIM-type" evidence="1">
    <location>
        <begin position="43"/>
        <end position="76"/>
    </location>
</feature>
<reference key="1">
    <citation type="journal article" date="1996" name="Science">
        <title>Complete genome sequence of the methanogenic archaeon, Methanococcus jannaschii.</title>
        <authorList>
            <person name="Bult C.J."/>
            <person name="White O."/>
            <person name="Olsen G.J."/>
            <person name="Zhou L."/>
            <person name="Fleischmann R.D."/>
            <person name="Sutton G.G."/>
            <person name="Blake J.A."/>
            <person name="FitzGerald L.M."/>
            <person name="Clayton R.A."/>
            <person name="Gocayne J.D."/>
            <person name="Kerlavage A.R."/>
            <person name="Dougherty B.A."/>
            <person name="Tomb J.-F."/>
            <person name="Adams M.D."/>
            <person name="Reich C.I."/>
            <person name="Overbeek R."/>
            <person name="Kirkness E.F."/>
            <person name="Weinstock K.G."/>
            <person name="Merrick J.M."/>
            <person name="Glodek A."/>
            <person name="Scott J.L."/>
            <person name="Geoghagen N.S.M."/>
            <person name="Weidman J.F."/>
            <person name="Fuhrmann J.L."/>
            <person name="Nguyen D."/>
            <person name="Utterback T.R."/>
            <person name="Kelley J.M."/>
            <person name="Peterson J.D."/>
            <person name="Sadow P.W."/>
            <person name="Hanna M.C."/>
            <person name="Cotton M.D."/>
            <person name="Roberts K.M."/>
            <person name="Hurst M.A."/>
            <person name="Kaine B.P."/>
            <person name="Borodovsky M."/>
            <person name="Klenk H.-P."/>
            <person name="Fraser C.M."/>
            <person name="Smith H.O."/>
            <person name="Woese C.R."/>
            <person name="Venter J.C."/>
        </authorList>
    </citation>
    <scope>NUCLEOTIDE SEQUENCE [LARGE SCALE GENOMIC DNA]</scope>
    <source>
        <strain>ATCC 43067 / DSM 2661 / JAL-1 / JCM 10045 / NBRC 100440</strain>
    </source>
</reference>
<proteinExistence type="predicted"/>
<sequence>MITMNYDPKIIERGKLYYRNNLVKYCIKYKNFLFGEVVGSDTYKVKVDLDNNYFGLCTCQYKYNCKHAYALIEAYENNNYVDAEEIFKEIEDKPKEEILKILKNLVVKYYLWDEFLNTDSLLNKAIGLIKLIPLERKNIYTFKSFLRNQFVKNADDEELIKVIDEMIRADLDFNNSDIIEALTIILDEIFRRENKEAIKKLINLYRKHKKELWIVGDYLIEYYDNYFDYED</sequence>
<evidence type="ECO:0000255" key="1">
    <source>
        <dbReference type="PROSITE-ProRule" id="PRU00325"/>
    </source>
</evidence>